<keyword id="KW-1003">Cell membrane</keyword>
<keyword id="KW-0472">Membrane</keyword>
<keyword id="KW-0812">Transmembrane</keyword>
<keyword id="KW-1133">Transmembrane helix</keyword>
<proteinExistence type="evidence at transcript level"/>
<name>CSPL1_PANGI</name>
<sequence length="148" mass="15776">MVTGKQTELIPIPFPPYQIPYSSKFTDSPAFIYFVAAFSVAGLYSIITSLLSGLALLKPGYAKQLVSHFVVVDVLLLGIVAAAIGAAGGVGYIGLRGNSHSRWTKICNIYDTFCQHLAGSIAAGLIASIVLVLLILLSFFTLSRKIPK</sequence>
<organism>
    <name type="scientific">Panax ginseng</name>
    <name type="common">Korean ginseng</name>
    <dbReference type="NCBI Taxonomy" id="4054"/>
    <lineage>
        <taxon>Eukaryota</taxon>
        <taxon>Viridiplantae</taxon>
        <taxon>Streptophyta</taxon>
        <taxon>Embryophyta</taxon>
        <taxon>Tracheophyta</taxon>
        <taxon>Spermatophyta</taxon>
        <taxon>Magnoliopsida</taxon>
        <taxon>eudicotyledons</taxon>
        <taxon>Gunneridae</taxon>
        <taxon>Pentapetalae</taxon>
        <taxon>asterids</taxon>
        <taxon>campanulids</taxon>
        <taxon>Apiales</taxon>
        <taxon>Araliaceae</taxon>
        <taxon>Panax</taxon>
    </lineage>
</organism>
<dbReference type="EMBL" id="DQ384528">
    <property type="protein sequence ID" value="ABD73297.1"/>
    <property type="molecule type" value="mRNA"/>
</dbReference>
<dbReference type="SMR" id="Q20BM9"/>
<dbReference type="GO" id="GO:0005886">
    <property type="term" value="C:plasma membrane"/>
    <property type="evidence" value="ECO:0007669"/>
    <property type="project" value="UniProtKB-SubCell"/>
</dbReference>
<dbReference type="InterPro" id="IPR006459">
    <property type="entry name" value="CASP/CASPL"/>
</dbReference>
<dbReference type="InterPro" id="IPR006702">
    <property type="entry name" value="CASP_dom"/>
</dbReference>
<dbReference type="InterPro" id="IPR044173">
    <property type="entry name" value="CASPL"/>
</dbReference>
<dbReference type="NCBIfam" id="TIGR01569">
    <property type="entry name" value="A_tha_TIGR01569"/>
    <property type="match status" value="1"/>
</dbReference>
<dbReference type="PANTHER" id="PTHR36488">
    <property type="entry name" value="CASP-LIKE PROTEIN 1U1"/>
    <property type="match status" value="1"/>
</dbReference>
<dbReference type="PANTHER" id="PTHR36488:SF8">
    <property type="entry name" value="CASP-LIKE PROTEIN 1U1"/>
    <property type="match status" value="1"/>
</dbReference>
<dbReference type="Pfam" id="PF04535">
    <property type="entry name" value="CASP_dom"/>
    <property type="match status" value="1"/>
</dbReference>
<accession>Q20BM9</accession>
<evidence type="ECO:0000250" key="1"/>
<evidence type="ECO:0000255" key="2"/>
<evidence type="ECO:0000305" key="3"/>
<feature type="chain" id="PRO_0000370723" description="CASP-like protein 1">
    <location>
        <begin position="1"/>
        <end position="148"/>
    </location>
</feature>
<feature type="transmembrane region" description="Helical" evidence="2">
    <location>
        <begin position="31"/>
        <end position="51"/>
    </location>
</feature>
<feature type="transmembrane region" description="Helical" evidence="2">
    <location>
        <begin position="74"/>
        <end position="94"/>
    </location>
</feature>
<feature type="transmembrane region" description="Helical" evidence="2">
    <location>
        <begin position="121"/>
        <end position="141"/>
    </location>
</feature>
<reference key="1">
    <citation type="submission" date="2006-01" db="EMBL/GenBank/DDBJ databases">
        <title>Identification of novel genes in Panax ginseng plant.</title>
        <authorList>
            <person name="Wang Y."/>
            <person name="Wang K."/>
            <person name="Bao Y.L."/>
            <person name="Meng X.Y."/>
            <person name="Wu Y."/>
            <person name="Li Y.X."/>
        </authorList>
    </citation>
    <scope>NUCLEOTIDE SEQUENCE [MRNA]</scope>
    <source>
        <tissue>Leaf</tissue>
    </source>
</reference>
<protein>
    <recommendedName>
        <fullName>CASP-like protein 1</fullName>
    </recommendedName>
</protein>
<comment type="subunit">
    <text evidence="1">Homodimer and heterodimers.</text>
</comment>
<comment type="subcellular location">
    <subcellularLocation>
        <location evidence="1">Cell membrane</location>
        <topology evidence="1">Multi-pass membrane protein</topology>
    </subcellularLocation>
</comment>
<comment type="similarity">
    <text evidence="3">Belongs to the Casparian strip membrane proteins (CASP) family.</text>
</comment>